<dbReference type="EMBL" id="CU928145">
    <property type="protein sequence ID" value="CAU99910.1"/>
    <property type="molecule type" value="Genomic_DNA"/>
</dbReference>
<dbReference type="RefSeq" id="WP_000510962.1">
    <property type="nucleotide sequence ID" value="NC_011748.1"/>
</dbReference>
<dbReference type="SMR" id="B7LHU8"/>
<dbReference type="GeneID" id="75206090"/>
<dbReference type="KEGG" id="eck:EC55989_3653"/>
<dbReference type="HOGENOM" id="CLU_027647_0_0_6"/>
<dbReference type="Proteomes" id="UP000000746">
    <property type="component" value="Chromosome"/>
</dbReference>
<dbReference type="GO" id="GO:0005886">
    <property type="term" value="C:plasma membrane"/>
    <property type="evidence" value="ECO:0007669"/>
    <property type="project" value="UniProtKB-SubCell"/>
</dbReference>
<dbReference type="GO" id="GO:0022857">
    <property type="term" value="F:transmembrane transporter activity"/>
    <property type="evidence" value="ECO:0007669"/>
    <property type="project" value="UniProtKB-UniRule"/>
</dbReference>
<dbReference type="GO" id="GO:0046942">
    <property type="term" value="P:carboxylic acid transport"/>
    <property type="evidence" value="ECO:0007669"/>
    <property type="project" value="InterPro"/>
</dbReference>
<dbReference type="HAMAP" id="MF_01545">
    <property type="entry name" value="AaeB"/>
    <property type="match status" value="1"/>
</dbReference>
<dbReference type="InterPro" id="IPR006726">
    <property type="entry name" value="PHBA_efflux_AaeB/fusaric-R"/>
</dbReference>
<dbReference type="InterPro" id="IPR023706">
    <property type="entry name" value="PHBA_efflux_pump_AaeB"/>
</dbReference>
<dbReference type="NCBIfam" id="NF007916">
    <property type="entry name" value="PRK10631.1"/>
    <property type="match status" value="1"/>
</dbReference>
<dbReference type="PANTHER" id="PTHR30509:SF9">
    <property type="entry name" value="MULTIDRUG RESISTANCE PROTEIN MDTO"/>
    <property type="match status" value="1"/>
</dbReference>
<dbReference type="PANTHER" id="PTHR30509">
    <property type="entry name" value="P-HYDROXYBENZOIC ACID EFFLUX PUMP SUBUNIT-RELATED"/>
    <property type="match status" value="1"/>
</dbReference>
<dbReference type="Pfam" id="PF04632">
    <property type="entry name" value="FUSC"/>
    <property type="match status" value="1"/>
</dbReference>
<evidence type="ECO:0000255" key="1">
    <source>
        <dbReference type="HAMAP-Rule" id="MF_01545"/>
    </source>
</evidence>
<keyword id="KW-0997">Cell inner membrane</keyword>
<keyword id="KW-1003">Cell membrane</keyword>
<keyword id="KW-0472">Membrane</keyword>
<keyword id="KW-1185">Reference proteome</keyword>
<keyword id="KW-0812">Transmembrane</keyword>
<keyword id="KW-1133">Transmembrane helix</keyword>
<keyword id="KW-0813">Transport</keyword>
<reference key="1">
    <citation type="journal article" date="2009" name="PLoS Genet.">
        <title>Organised genome dynamics in the Escherichia coli species results in highly diverse adaptive paths.</title>
        <authorList>
            <person name="Touchon M."/>
            <person name="Hoede C."/>
            <person name="Tenaillon O."/>
            <person name="Barbe V."/>
            <person name="Baeriswyl S."/>
            <person name="Bidet P."/>
            <person name="Bingen E."/>
            <person name="Bonacorsi S."/>
            <person name="Bouchier C."/>
            <person name="Bouvet O."/>
            <person name="Calteau A."/>
            <person name="Chiapello H."/>
            <person name="Clermont O."/>
            <person name="Cruveiller S."/>
            <person name="Danchin A."/>
            <person name="Diard M."/>
            <person name="Dossat C."/>
            <person name="Karoui M.E."/>
            <person name="Frapy E."/>
            <person name="Garry L."/>
            <person name="Ghigo J.M."/>
            <person name="Gilles A.M."/>
            <person name="Johnson J."/>
            <person name="Le Bouguenec C."/>
            <person name="Lescat M."/>
            <person name="Mangenot S."/>
            <person name="Martinez-Jehanne V."/>
            <person name="Matic I."/>
            <person name="Nassif X."/>
            <person name="Oztas S."/>
            <person name="Petit M.A."/>
            <person name="Pichon C."/>
            <person name="Rouy Z."/>
            <person name="Ruf C.S."/>
            <person name="Schneider D."/>
            <person name="Tourret J."/>
            <person name="Vacherie B."/>
            <person name="Vallenet D."/>
            <person name="Medigue C."/>
            <person name="Rocha E.P.C."/>
            <person name="Denamur E."/>
        </authorList>
    </citation>
    <scope>NUCLEOTIDE SEQUENCE [LARGE SCALE GENOMIC DNA]</scope>
    <source>
        <strain>55989 / EAEC</strain>
    </source>
</reference>
<protein>
    <recommendedName>
        <fullName evidence="1">p-hydroxybenzoic acid efflux pump subunit AaeB</fullName>
        <shortName evidence="1">pHBA efflux pump protein B</shortName>
    </recommendedName>
</protein>
<name>AAEB_ECO55</name>
<proteinExistence type="inferred from homology"/>
<feature type="chain" id="PRO_1000185280" description="p-hydroxybenzoic acid efflux pump subunit AaeB">
    <location>
        <begin position="1"/>
        <end position="655"/>
    </location>
</feature>
<feature type="transmembrane region" description="Helical" evidence="1">
    <location>
        <begin position="13"/>
        <end position="33"/>
    </location>
</feature>
<feature type="transmembrane region" description="Helical" evidence="1">
    <location>
        <begin position="38"/>
        <end position="58"/>
    </location>
</feature>
<feature type="transmembrane region" description="Helical" evidence="1">
    <location>
        <begin position="69"/>
        <end position="89"/>
    </location>
</feature>
<feature type="transmembrane region" description="Helical" evidence="1">
    <location>
        <begin position="93"/>
        <end position="113"/>
    </location>
</feature>
<feature type="transmembrane region" description="Helical" evidence="1">
    <location>
        <begin position="121"/>
        <end position="141"/>
    </location>
</feature>
<feature type="transmembrane region" description="Helical" evidence="1">
    <location>
        <begin position="152"/>
        <end position="172"/>
    </location>
</feature>
<feature type="transmembrane region" description="Helical" evidence="1">
    <location>
        <begin position="370"/>
        <end position="390"/>
    </location>
</feature>
<feature type="transmembrane region" description="Helical" evidence="1">
    <location>
        <begin position="407"/>
        <end position="427"/>
    </location>
</feature>
<feature type="transmembrane region" description="Helical" evidence="1">
    <location>
        <begin position="431"/>
        <end position="451"/>
    </location>
</feature>
<feature type="transmembrane region" description="Helical" evidence="1">
    <location>
        <begin position="459"/>
        <end position="479"/>
    </location>
</feature>
<feature type="transmembrane region" description="Helical" evidence="1">
    <location>
        <begin position="482"/>
        <end position="502"/>
    </location>
</feature>
<sequence length="655" mass="73611">MGIFSIANQHIRFAVKLATAIVLALFVGFHFQLETPRWAVLTAAIVAAGPAFAAGGEPYSGAIRYRGFLRIIGTFIGCIAGLVIIIAMIRAPLLMILVCCIWAGFCTWISSLVRIENSYAWGLAGYTALIIVITIQPEPLLTPQFAVERCSEIVIGIVCAIMADLLFSPRSIKQEVDRELESLLVAQYQLMQLCIKHGDGEVVDKAWGDLVRRTTALQGMRSNLNMESSRWARANRRLKAINTLSLTLITQSCETYLIQNTRPELITDTFREFFDTPVETAQDVHKQLKRLRRVIAWTGERETPVTIYSWVAAATRYQLLKRGVISNTKINATEEEILQGEPEVKVESAERHHAMVNFWRTTLSCILGTLFWLWTGWTSGSGAMVMIAVVTSLAMRLPNPRMVAIDFIYGTLAALPLGLLYFLVIIPNTQQSMLLLCISLAVLGFFLGIEVQKRRLGSMGALASTINIIVLDNPMTFHFSQFLDSALGQIVGCVLAFTVILLVRDKSRDRTGRVLLNQFVSAAVSAMTTNVARRKENHLPALYQQLFLLMNKFPGDLPKFRLALTMIIAHQRLRDAPIPVNEDLSAFHRQMRRTADHVISARSDDKRRRYFGQLLEELEIYQEKLRIWQAPPQVTEPVHRLAGMLHKYQHALTDS</sequence>
<comment type="function">
    <text evidence="1">Forms an efflux pump with AaeA. Could function as a metabolic relief valve, allowing to eliminate certain compounds when they accumulate to high levels in the cell.</text>
</comment>
<comment type="subcellular location">
    <subcellularLocation>
        <location evidence="1">Cell inner membrane</location>
        <topology evidence="1">Multi-pass membrane protein</topology>
    </subcellularLocation>
</comment>
<comment type="induction">
    <text evidence="1">Positively coregulated with aaeA and aaeX by AaeR.</text>
</comment>
<comment type="similarity">
    <text evidence="1">Belongs to the aromatic acid exporter ArAE (TC 2.A.85) family.</text>
</comment>
<organism>
    <name type="scientific">Escherichia coli (strain 55989 / EAEC)</name>
    <dbReference type="NCBI Taxonomy" id="585055"/>
    <lineage>
        <taxon>Bacteria</taxon>
        <taxon>Pseudomonadati</taxon>
        <taxon>Pseudomonadota</taxon>
        <taxon>Gammaproteobacteria</taxon>
        <taxon>Enterobacterales</taxon>
        <taxon>Enterobacteriaceae</taxon>
        <taxon>Escherichia</taxon>
    </lineage>
</organism>
<accession>B7LHU8</accession>
<gene>
    <name evidence="1" type="primary">aaeB</name>
    <name type="ordered locus">EC55989_3653</name>
</gene>